<dbReference type="EMBL" id="BC123472">
    <property type="protein sequence ID" value="AAI23473.1"/>
    <property type="molecule type" value="mRNA"/>
</dbReference>
<dbReference type="RefSeq" id="NP_001069604.1">
    <property type="nucleotide sequence ID" value="NM_001076136.1"/>
</dbReference>
<dbReference type="SMR" id="Q08E12"/>
<dbReference type="FunCoup" id="Q08E12">
    <property type="interactions" value="2377"/>
</dbReference>
<dbReference type="STRING" id="9913.ENSBTAP00000012322"/>
<dbReference type="PaxDb" id="9913-ENSBTAP00000012322"/>
<dbReference type="Ensembl" id="ENSBTAT00000012322.5">
    <property type="protein sequence ID" value="ENSBTAP00000012322.4"/>
    <property type="gene ID" value="ENSBTAG00000009363.6"/>
</dbReference>
<dbReference type="GeneID" id="538943"/>
<dbReference type="KEGG" id="bta:538943"/>
<dbReference type="CTD" id="64785"/>
<dbReference type="VEuPathDB" id="HostDB:ENSBTAG00000009363"/>
<dbReference type="VGNC" id="VGNC:29362">
    <property type="gene designation" value="GINS3"/>
</dbReference>
<dbReference type="eggNOG" id="KOG1106">
    <property type="taxonomic scope" value="Eukaryota"/>
</dbReference>
<dbReference type="GeneTree" id="ENSGT00390000001622"/>
<dbReference type="HOGENOM" id="CLU_081646_2_0_1"/>
<dbReference type="InParanoid" id="Q08E12"/>
<dbReference type="OMA" id="IYKEGWR"/>
<dbReference type="OrthoDB" id="10251744at2759"/>
<dbReference type="TreeFam" id="TF314626"/>
<dbReference type="Reactome" id="R-BTA-176974">
    <property type="pathway name" value="Unwinding of DNA"/>
</dbReference>
<dbReference type="Proteomes" id="UP000009136">
    <property type="component" value="Chromosome 18"/>
</dbReference>
<dbReference type="Bgee" id="ENSBTAG00000009363">
    <property type="expression patterns" value="Expressed in oocyte and 103 other cell types or tissues"/>
</dbReference>
<dbReference type="GO" id="GO:0071162">
    <property type="term" value="C:CMG complex"/>
    <property type="evidence" value="ECO:0000250"/>
    <property type="project" value="UniProtKB"/>
</dbReference>
<dbReference type="GO" id="GO:0000811">
    <property type="term" value="C:GINS complex"/>
    <property type="evidence" value="ECO:0000318"/>
    <property type="project" value="GO_Central"/>
</dbReference>
<dbReference type="GO" id="GO:0090398">
    <property type="term" value="P:cellular senescence"/>
    <property type="evidence" value="ECO:0007669"/>
    <property type="project" value="Ensembl"/>
</dbReference>
<dbReference type="GO" id="GO:1902975">
    <property type="term" value="P:mitotic DNA replication initiation"/>
    <property type="evidence" value="ECO:0000318"/>
    <property type="project" value="GO_Central"/>
</dbReference>
<dbReference type="GO" id="GO:0035264">
    <property type="term" value="P:multicellular organism growth"/>
    <property type="evidence" value="ECO:0007669"/>
    <property type="project" value="Ensembl"/>
</dbReference>
<dbReference type="CDD" id="cd11713">
    <property type="entry name" value="GINS_A_psf3"/>
    <property type="match status" value="1"/>
</dbReference>
<dbReference type="CDD" id="cd21693">
    <property type="entry name" value="GINS_B_Psf3"/>
    <property type="match status" value="1"/>
</dbReference>
<dbReference type="FunFam" id="1.20.58.2050:FF:000001">
    <property type="entry name" value="DNA replication complex GINS protein PSF3"/>
    <property type="match status" value="1"/>
</dbReference>
<dbReference type="Gene3D" id="1.20.58.2050">
    <property type="match status" value="1"/>
</dbReference>
<dbReference type="InterPro" id="IPR021151">
    <property type="entry name" value="GINS_A"/>
</dbReference>
<dbReference type="InterPro" id="IPR036224">
    <property type="entry name" value="GINS_bundle-like_dom_sf"/>
</dbReference>
<dbReference type="InterPro" id="IPR010492">
    <property type="entry name" value="GINS_Psf3"/>
</dbReference>
<dbReference type="InterPro" id="IPR038437">
    <property type="entry name" value="GINS_Psf3_sf"/>
</dbReference>
<dbReference type="InterPro" id="IPR055221">
    <property type="entry name" value="PSF3_N"/>
</dbReference>
<dbReference type="PANTHER" id="PTHR22768">
    <property type="entry name" value="DNA REPLICATION COMPLEX GINS PROTEIN PSF3"/>
    <property type="match status" value="1"/>
</dbReference>
<dbReference type="PANTHER" id="PTHR22768:SF0">
    <property type="entry name" value="DNA REPLICATION COMPLEX GINS PROTEIN PSF3"/>
    <property type="match status" value="1"/>
</dbReference>
<dbReference type="Pfam" id="PF22466">
    <property type="entry name" value="PSF3_N"/>
    <property type="match status" value="1"/>
</dbReference>
<dbReference type="Pfam" id="PF05916">
    <property type="entry name" value="Sld5"/>
    <property type="match status" value="1"/>
</dbReference>
<dbReference type="SUPFAM" id="SSF158573">
    <property type="entry name" value="GINS helical bundle-like"/>
    <property type="match status" value="1"/>
</dbReference>
<dbReference type="SUPFAM" id="SSF160059">
    <property type="entry name" value="PriA/YqbF domain"/>
    <property type="match status" value="1"/>
</dbReference>
<gene>
    <name type="primary">GINS3</name>
    <name type="synonym">PSF3</name>
</gene>
<comment type="function">
    <text evidence="2">Required for correct functioning of the GINS complex, a complex that plays an essential role in the initiation of DNA replication, and progression of DNA replication forks. GINS complex is a core component of CDC45-MCM-GINS (CMG) helicase, the molecular machine that unwinds template DNA during replication, and around which the replisome is built.</text>
</comment>
<comment type="subunit">
    <text evidence="2">Component of the GINS complex which is a heterotetramer of GINS1, GINS2, GINS3 and GINS4. Forms a stable subcomplex with GINS2. GINS complex interacts with DNA primase in vitro. Component of the CMG helicase complex, a hexameric ring of related MCM2-7 subunits stabilized by CDC45 and the tetrameric GINS complex.</text>
</comment>
<comment type="subcellular location">
    <subcellularLocation>
        <location evidence="2">Nucleus</location>
    </subcellularLocation>
    <subcellularLocation>
        <location evidence="2">Chromosome</location>
    </subcellularLocation>
    <text evidence="2">Associates with chromatin.</text>
</comment>
<comment type="similarity">
    <text evidence="3">Belongs to the GINS3/PSF3 family.</text>
</comment>
<organism>
    <name type="scientific">Bos taurus</name>
    <name type="common">Bovine</name>
    <dbReference type="NCBI Taxonomy" id="9913"/>
    <lineage>
        <taxon>Eukaryota</taxon>
        <taxon>Metazoa</taxon>
        <taxon>Chordata</taxon>
        <taxon>Craniata</taxon>
        <taxon>Vertebrata</taxon>
        <taxon>Euteleostomi</taxon>
        <taxon>Mammalia</taxon>
        <taxon>Eutheria</taxon>
        <taxon>Laurasiatheria</taxon>
        <taxon>Artiodactyla</taxon>
        <taxon>Ruminantia</taxon>
        <taxon>Pecora</taxon>
        <taxon>Bovidae</taxon>
        <taxon>Bovinae</taxon>
        <taxon>Bos</taxon>
    </lineage>
</organism>
<protein>
    <recommendedName>
        <fullName>DNA replication complex GINS protein PSF3</fullName>
    </recommendedName>
    <alternativeName>
        <fullName>GINS complex subunit 3</fullName>
    </alternativeName>
</protein>
<name>PSF3_BOVIN</name>
<sequence length="216" mass="24476">MSEAYFRVESGALGPEENFLSLDDILMSHEKLSVRTEIPMPRLGAFFLDRSGGAETDNAIPEGTKLELPLWLAKGLFDNKRRILSVELPKIYQEGWRTVFSADANVVDLHKMGPHFYGFGSQLLHFDSPENADISHSLLQTFVGRFRRIMDSSQNAYNEDTSALVARLDEMERGLFQTGQKGLNDFQCWEKGQASQLTASNLVQNYAKRKFTDMED</sequence>
<feature type="chain" id="PRO_0000327614" description="DNA replication complex GINS protein PSF3">
    <location>
        <begin position="1"/>
        <end position="216"/>
    </location>
</feature>
<feature type="region of interest" description="Not essential for folding and stability of GINS complex, but may regulate accessibility to the central complex pore" evidence="1">
    <location>
        <begin position="1"/>
        <end position="16"/>
    </location>
</feature>
<proteinExistence type="evidence at transcript level"/>
<keyword id="KW-0158">Chromosome</keyword>
<keyword id="KW-0235">DNA replication</keyword>
<keyword id="KW-0539">Nucleus</keyword>
<keyword id="KW-1185">Reference proteome</keyword>
<evidence type="ECO:0000250" key="1"/>
<evidence type="ECO:0000250" key="2">
    <source>
        <dbReference type="UniProtKB" id="Q9BRX5"/>
    </source>
</evidence>
<evidence type="ECO:0000305" key="3"/>
<reference key="1">
    <citation type="submission" date="2006-09" db="EMBL/GenBank/DDBJ databases">
        <authorList>
            <consortium name="NIH - Mammalian Gene Collection (MGC) project"/>
        </authorList>
    </citation>
    <scope>NUCLEOTIDE SEQUENCE [LARGE SCALE MRNA]</scope>
    <source>
        <strain>Hereford</strain>
        <tissue>Fetal skin</tissue>
    </source>
</reference>
<accession>Q08E12</accession>